<proteinExistence type="inferred from homology"/>
<protein>
    <recommendedName>
        <fullName evidence="1">UPF0340 protein MW2038</fullName>
    </recommendedName>
</protein>
<name>Y2038_STAAW</name>
<sequence>MKDLTMLLDELKDMSFFNKGDICLIGCSTSEVIGEKIGTVGSMEVAETIFNALDVVSKETGVTFAFQGCEHINRAITIEKSQYNPLTMEEVSVVPDVHAGGSLATYAFQHMKDPIVVEHITVPCGIDIGQTLIGMHIKHVCVPVRTSVKQVGQAIVTIATSRPKKIGGERAKYQ</sequence>
<comment type="similarity">
    <text evidence="1">Belongs to the UPF0340 family.</text>
</comment>
<dbReference type="EMBL" id="BA000033">
    <property type="protein sequence ID" value="BAB95903.1"/>
    <property type="molecule type" value="Genomic_DNA"/>
</dbReference>
<dbReference type="RefSeq" id="WP_000654185.1">
    <property type="nucleotide sequence ID" value="NC_003923.1"/>
</dbReference>
<dbReference type="SMR" id="Q8NVG8"/>
<dbReference type="KEGG" id="sam:MW2038"/>
<dbReference type="HOGENOM" id="CLU_106658_0_0_9"/>
<dbReference type="Gene3D" id="3.40.50.10360">
    <property type="entry name" value="Hypothetical protein TT1679"/>
    <property type="match status" value="1"/>
</dbReference>
<dbReference type="HAMAP" id="MF_00800">
    <property type="entry name" value="UPF0340"/>
    <property type="match status" value="1"/>
</dbReference>
<dbReference type="InterPro" id="IPR028345">
    <property type="entry name" value="Antibiotic_NAT-like"/>
</dbReference>
<dbReference type="InterPro" id="IPR006340">
    <property type="entry name" value="DUF436"/>
</dbReference>
<dbReference type="NCBIfam" id="TIGR01440">
    <property type="entry name" value="TIGR01440 family protein"/>
    <property type="match status" value="1"/>
</dbReference>
<dbReference type="Pfam" id="PF04260">
    <property type="entry name" value="DUF436"/>
    <property type="match status" value="1"/>
</dbReference>
<dbReference type="PIRSF" id="PIRSF007510">
    <property type="entry name" value="UCP007510"/>
    <property type="match status" value="1"/>
</dbReference>
<dbReference type="SUPFAM" id="SSF110710">
    <property type="entry name" value="TTHA0583/YokD-like"/>
    <property type="match status" value="1"/>
</dbReference>
<gene>
    <name type="ordered locus">MW2038</name>
</gene>
<reference key="1">
    <citation type="journal article" date="2002" name="Lancet">
        <title>Genome and virulence determinants of high virulence community-acquired MRSA.</title>
        <authorList>
            <person name="Baba T."/>
            <person name="Takeuchi F."/>
            <person name="Kuroda M."/>
            <person name="Yuzawa H."/>
            <person name="Aoki K."/>
            <person name="Oguchi A."/>
            <person name="Nagai Y."/>
            <person name="Iwama N."/>
            <person name="Asano K."/>
            <person name="Naimi T."/>
            <person name="Kuroda H."/>
            <person name="Cui L."/>
            <person name="Yamamoto K."/>
            <person name="Hiramatsu K."/>
        </authorList>
    </citation>
    <scope>NUCLEOTIDE SEQUENCE [LARGE SCALE GENOMIC DNA]</scope>
    <source>
        <strain>MW2</strain>
    </source>
</reference>
<feature type="chain" id="PRO_0000213015" description="UPF0340 protein MW2038">
    <location>
        <begin position="1"/>
        <end position="174"/>
    </location>
</feature>
<organism>
    <name type="scientific">Staphylococcus aureus (strain MW2)</name>
    <dbReference type="NCBI Taxonomy" id="196620"/>
    <lineage>
        <taxon>Bacteria</taxon>
        <taxon>Bacillati</taxon>
        <taxon>Bacillota</taxon>
        <taxon>Bacilli</taxon>
        <taxon>Bacillales</taxon>
        <taxon>Staphylococcaceae</taxon>
        <taxon>Staphylococcus</taxon>
    </lineage>
</organism>
<accession>Q8NVG8</accession>
<evidence type="ECO:0000255" key="1">
    <source>
        <dbReference type="HAMAP-Rule" id="MF_00800"/>
    </source>
</evidence>